<evidence type="ECO:0000269" key="1">
    <source>
    </source>
</evidence>
<evidence type="ECO:0000303" key="2">
    <source>
    </source>
</evidence>
<evidence type="ECO:0000305" key="3"/>
<evidence type="ECO:0000312" key="4">
    <source>
        <dbReference type="EMBL" id="QJP89694.1"/>
    </source>
</evidence>
<feature type="chain" id="PRO_0000049906" description="Monothiol bacilliredoxin BrxC">
    <location>
        <begin position="1"/>
        <end position="108"/>
    </location>
</feature>
<feature type="modified residue" description="S-bacillithiol cysteine disulfide" evidence="1">
    <location>
        <position position="31"/>
    </location>
</feature>
<feature type="mutagenesis site" description="Loss of debacillithiolation of S-bacillithiolated Bdr (Bdr-SSB)." evidence="1">
    <original>C</original>
    <variation>A</variation>
    <location>
        <position position="31"/>
    </location>
</feature>
<sequence length="108" mass="12402">MAKQLIQSEEEFKRIAEQEGVFVFLKHSTTCPISQAAFHEFDAFANQHEDVPAYYLQVQEARPLSNFIAETYGVKHESPQIFIIQNGEVKWHTSHSQITEAAIEQHLS</sequence>
<name>BRXC_BACSU</name>
<accession>P39914</accession>
<accession>A0A6M4JNQ9</accession>
<reference key="1">
    <citation type="journal article" date="1995" name="Microbiology">
        <title>Identical amino acid sequence of the aroA(G) gene products of Bacillus subtilis 168 and B. subtilis Marburg strain.</title>
        <authorList>
            <person name="Bolotin A.P."/>
            <person name="Khazak V.E."/>
            <person name="Stoynova N."/>
            <person name="Ratmanova K."/>
            <person name="Yomantas Y."/>
            <person name="Kozlov Y."/>
        </authorList>
    </citation>
    <scope>NUCLEOTIDE SEQUENCE [GENOMIC DNA]</scope>
    <source>
        <strain>168</strain>
    </source>
</reference>
<reference key="2">
    <citation type="journal article" date="1997" name="Microbiology">
        <title>Sequencing and functional annotation of the Bacillus subtilis genes in the 200 kb rrnB-dnaB region.</title>
        <authorList>
            <person name="Lapidus A."/>
            <person name="Galleron N."/>
            <person name="Sorokin A."/>
            <person name="Ehrlich S.D."/>
        </authorList>
    </citation>
    <scope>NUCLEOTIDE SEQUENCE [GENOMIC DNA]</scope>
    <source>
        <strain>168</strain>
    </source>
</reference>
<reference key="3">
    <citation type="journal article" date="1997" name="Nature">
        <title>The complete genome sequence of the Gram-positive bacterium Bacillus subtilis.</title>
        <authorList>
            <person name="Kunst F."/>
            <person name="Ogasawara N."/>
            <person name="Moszer I."/>
            <person name="Albertini A.M."/>
            <person name="Alloni G."/>
            <person name="Azevedo V."/>
            <person name="Bertero M.G."/>
            <person name="Bessieres P."/>
            <person name="Bolotin A."/>
            <person name="Borchert S."/>
            <person name="Borriss R."/>
            <person name="Boursier L."/>
            <person name="Brans A."/>
            <person name="Braun M."/>
            <person name="Brignell S.C."/>
            <person name="Bron S."/>
            <person name="Brouillet S."/>
            <person name="Bruschi C.V."/>
            <person name="Caldwell B."/>
            <person name="Capuano V."/>
            <person name="Carter N.M."/>
            <person name="Choi S.-K."/>
            <person name="Codani J.-J."/>
            <person name="Connerton I.F."/>
            <person name="Cummings N.J."/>
            <person name="Daniel R.A."/>
            <person name="Denizot F."/>
            <person name="Devine K.M."/>
            <person name="Duesterhoeft A."/>
            <person name="Ehrlich S.D."/>
            <person name="Emmerson P.T."/>
            <person name="Entian K.-D."/>
            <person name="Errington J."/>
            <person name="Fabret C."/>
            <person name="Ferrari E."/>
            <person name="Foulger D."/>
            <person name="Fritz C."/>
            <person name="Fujita M."/>
            <person name="Fujita Y."/>
            <person name="Fuma S."/>
            <person name="Galizzi A."/>
            <person name="Galleron N."/>
            <person name="Ghim S.-Y."/>
            <person name="Glaser P."/>
            <person name="Goffeau A."/>
            <person name="Golightly E.J."/>
            <person name="Grandi G."/>
            <person name="Guiseppi G."/>
            <person name="Guy B.J."/>
            <person name="Haga K."/>
            <person name="Haiech J."/>
            <person name="Harwood C.R."/>
            <person name="Henaut A."/>
            <person name="Hilbert H."/>
            <person name="Holsappel S."/>
            <person name="Hosono S."/>
            <person name="Hullo M.-F."/>
            <person name="Itaya M."/>
            <person name="Jones L.-M."/>
            <person name="Joris B."/>
            <person name="Karamata D."/>
            <person name="Kasahara Y."/>
            <person name="Klaerr-Blanchard M."/>
            <person name="Klein C."/>
            <person name="Kobayashi Y."/>
            <person name="Koetter P."/>
            <person name="Koningstein G."/>
            <person name="Krogh S."/>
            <person name="Kumano M."/>
            <person name="Kurita K."/>
            <person name="Lapidus A."/>
            <person name="Lardinois S."/>
            <person name="Lauber J."/>
            <person name="Lazarevic V."/>
            <person name="Lee S.-M."/>
            <person name="Levine A."/>
            <person name="Liu H."/>
            <person name="Masuda S."/>
            <person name="Mauel C."/>
            <person name="Medigue C."/>
            <person name="Medina N."/>
            <person name="Mellado R.P."/>
            <person name="Mizuno M."/>
            <person name="Moestl D."/>
            <person name="Nakai S."/>
            <person name="Noback M."/>
            <person name="Noone D."/>
            <person name="O'Reilly M."/>
            <person name="Ogawa K."/>
            <person name="Ogiwara A."/>
            <person name="Oudega B."/>
            <person name="Park S.-H."/>
            <person name="Parro V."/>
            <person name="Pohl T.M."/>
            <person name="Portetelle D."/>
            <person name="Porwollik S."/>
            <person name="Prescott A.M."/>
            <person name="Presecan E."/>
            <person name="Pujic P."/>
            <person name="Purnelle B."/>
            <person name="Rapoport G."/>
            <person name="Rey M."/>
            <person name="Reynolds S."/>
            <person name="Rieger M."/>
            <person name="Rivolta C."/>
            <person name="Rocha E."/>
            <person name="Roche B."/>
            <person name="Rose M."/>
            <person name="Sadaie Y."/>
            <person name="Sato T."/>
            <person name="Scanlan E."/>
            <person name="Schleich S."/>
            <person name="Schroeter R."/>
            <person name="Scoffone F."/>
            <person name="Sekiguchi J."/>
            <person name="Sekowska A."/>
            <person name="Seror S.J."/>
            <person name="Serror P."/>
            <person name="Shin B.-S."/>
            <person name="Soldo B."/>
            <person name="Sorokin A."/>
            <person name="Tacconi E."/>
            <person name="Takagi T."/>
            <person name="Takahashi H."/>
            <person name="Takemaru K."/>
            <person name="Takeuchi M."/>
            <person name="Tamakoshi A."/>
            <person name="Tanaka T."/>
            <person name="Terpstra P."/>
            <person name="Tognoni A."/>
            <person name="Tosato V."/>
            <person name="Uchiyama S."/>
            <person name="Vandenbol M."/>
            <person name="Vannier F."/>
            <person name="Vassarotti A."/>
            <person name="Viari A."/>
            <person name="Wambutt R."/>
            <person name="Wedler E."/>
            <person name="Wedler H."/>
            <person name="Weitzenegger T."/>
            <person name="Winters P."/>
            <person name="Wipat A."/>
            <person name="Yamamoto H."/>
            <person name="Yamane K."/>
            <person name="Yasumoto K."/>
            <person name="Yata K."/>
            <person name="Yoshida K."/>
            <person name="Yoshikawa H.-F."/>
            <person name="Zumstein E."/>
            <person name="Yoshikawa H."/>
            <person name="Danchin A."/>
        </authorList>
    </citation>
    <scope>NUCLEOTIDE SEQUENCE [LARGE SCALE GENOMIC DNA]</scope>
    <source>
        <strain>168</strain>
    </source>
</reference>
<reference evidence="4" key="4">
    <citation type="journal article" date="2021" name="ISME J.">
        <title>Pervasive prophage recombination occurs during evolution of spore-forming Bacilli.</title>
        <authorList>
            <person name="Dragos A."/>
            <person name="Priyadarshini B."/>
            <person name="Hasan Z."/>
            <person name="Strube M.L."/>
            <person name="Kempen P.J."/>
            <person name="Maroti G."/>
            <person name="Kaspar C."/>
            <person name="Bose B."/>
            <person name="Burton B.M."/>
            <person name="Bischofs I.B."/>
            <person name="Kovacs A.T."/>
        </authorList>
    </citation>
    <scope>NUCLEOTIDE SEQUENCE [LARGE SCALE GENOMIC DNA]</scope>
    <source>
        <strain evidence="4">168 / B410wtB</strain>
    </source>
</reference>
<reference key="5">
    <citation type="journal article" date="1996" name="Mol. Microbiol.">
        <title>Bacillus subtilis operon under the dual control of the general stress transcription factor sigma B and the sporulation transcription factor sigma H.</title>
        <authorList>
            <person name="Varon D."/>
            <person name="Brody M.S."/>
            <person name="Price C.W."/>
        </authorList>
    </citation>
    <scope>NUCLEOTIDE SEQUENCE [GENOMIC DNA] OF 1-56</scope>
    <source>
        <strain>168 / Marburg / ATCC 6051 / DSM 10 / JCM 1465 / NBRC 13719 / NCIMB 3610 / NRRL NRS-744 / VKM B-501</strain>
    </source>
</reference>
<reference key="6">
    <citation type="journal article" date="2021" name="Redox Biol.">
        <title>The Bacillus subtilis monothiol bacilliredoxin BrxC (YtxJ) and the Bdr (YpdA) disulfide reductase reduce S-bacillithiolated proteins.</title>
        <authorList>
            <person name="Gaballa A."/>
            <person name="Su T.T."/>
            <person name="Helmann J.D."/>
        </authorList>
    </citation>
    <scope>FUNCTION</scope>
    <scope>INTERACTION WITH ABRB; BDHA; BDR; BRXB; FOLD; GAPA; GAPB; GATA; PFKA; PYRAA; PYRAB; PYRE; PYRG; PYRH; RPSB; RPSK; RPSL; SALA; SUCC; TUF AND YTSJ</scope>
    <scope>PTM</scope>
    <scope>DISRUPTION PHENOTYPE</scope>
    <scope>POST-TRANSLATIONAL MODIFICATION AT CYS-31</scope>
    <scope>MUTAGENESIS OF CYS-31</scope>
    <scope>3D-STRUCTURE MODELING</scope>
    <source>
        <strain evidence="2">168 / CU1065</strain>
    </source>
</reference>
<gene>
    <name evidence="2" type="primary">brxC</name>
    <name evidence="2 4" type="synonym">ytxJ</name>
    <name type="ordered locus">BSU29760</name>
    <name evidence="4" type="ORF">HIR78_17325</name>
</gene>
<proteinExistence type="evidence at protein level"/>
<organism>
    <name type="scientific">Bacillus subtilis (strain 168)</name>
    <dbReference type="NCBI Taxonomy" id="224308"/>
    <lineage>
        <taxon>Bacteria</taxon>
        <taxon>Bacillati</taxon>
        <taxon>Bacillota</taxon>
        <taxon>Bacilli</taxon>
        <taxon>Bacillales</taxon>
        <taxon>Bacillaceae</taxon>
        <taxon>Bacillus</taxon>
    </lineage>
</organism>
<protein>
    <recommendedName>
        <fullName evidence="2">Monothiol bacilliredoxin BrxC</fullName>
        <shortName evidence="3">Monothiol Brx-C</shortName>
    </recommendedName>
    <alternativeName>
        <fullName evidence="4">Bacillithiol system redox-active protein YtxJ</fullName>
    </alternativeName>
    <alternativeName>
        <fullName>ORF2</fullName>
    </alternativeName>
    <alternativeName>
        <fullName>ORF3</fullName>
    </alternativeName>
</protein>
<comment type="function">
    <text evidence="1">S-bacillithiolation is the formation of mixed disulfide bonds between protein thiols and the general thiol reductant bacillithiol (BSH) under oxidative stress. BSH is an equivalent of glutathione (GSH) in Firmicutes. This protein is a monothiol bacilliredoxin, which debacillithiolates (removes BSH) the S-bacillithiolated glyceraldehyde-3-phosphate dehydrogenases (GAPDHs) GapA and GapB in vivo and probably a number of other oxidized cytosolic proteins. Debacillithiolates the S-bacillithiolated Bdr (Bdr-SSB) and BrxB (BrxB-SSB) in vitro. Involved in maintaining redox homeostasis in response to disulfide stress conditions.</text>
</comment>
<comment type="subunit">
    <text evidence="1">Interacts with AbrB, BdhA, Bdr, BrxB, FolD, GapA, GapB, GatA, PfkA, PyrAA, PyrAB, PyrE, PyrG, PyrH, RpsB, RpsK, RpsL, SalA, SucC, Tuf and YtsJ.</text>
</comment>
<comment type="PTM">
    <text evidence="1">Cys can react with bacillithiol (BSH) to form mixed disulfides. S-bacillithiolation protects Cys residues against overoxidation by acting as a redox switch in response to oxidative stress.</text>
</comment>
<comment type="disruption phenotype">
    <text evidence="1">Cells lacking the operon including this gene (ytxGH-brxC) have increased S-bacillithiolation of glyceraldehyde-3-phosphate dehydrogenases (GAPDHs) GapA and GapB in cells with increased basal levels of oxidative stress due to concomitant deletion of genes encoding for catalase (katA) and alkyl hydroperoxide reductase (ahpCF).</text>
</comment>
<dbReference type="EMBL" id="X65945">
    <property type="protein sequence ID" value="CAA46762.1"/>
    <property type="molecule type" value="Genomic_DNA"/>
</dbReference>
<dbReference type="EMBL" id="AF008220">
    <property type="protein sequence ID" value="AAC00297.1"/>
    <property type="molecule type" value="Genomic_DNA"/>
</dbReference>
<dbReference type="EMBL" id="AL009126">
    <property type="protein sequence ID" value="CAB14954.1"/>
    <property type="molecule type" value="Genomic_DNA"/>
</dbReference>
<dbReference type="EMBL" id="CP052842">
    <property type="protein sequence ID" value="QJP89694.1"/>
    <property type="molecule type" value="Genomic_DNA"/>
</dbReference>
<dbReference type="EMBL" id="L31845">
    <property type="protein sequence ID" value="AAB40046.1"/>
    <property type="molecule type" value="Genomic_DNA"/>
</dbReference>
<dbReference type="PIR" id="S21420">
    <property type="entry name" value="S21420"/>
</dbReference>
<dbReference type="RefSeq" id="WP_003229280.1">
    <property type="nucleotide sequence ID" value="NZ_OZ025638.1"/>
</dbReference>
<dbReference type="SMR" id="P39914"/>
<dbReference type="FunCoup" id="P39914">
    <property type="interactions" value="29"/>
</dbReference>
<dbReference type="STRING" id="224308.BSU29760"/>
<dbReference type="PaxDb" id="224308-BSU29760"/>
<dbReference type="EnsemblBacteria" id="CAB14954">
    <property type="protein sequence ID" value="CAB14954"/>
    <property type="gene ID" value="BSU_29760"/>
</dbReference>
<dbReference type="GeneID" id="937308"/>
<dbReference type="KEGG" id="bsu:BSU29760"/>
<dbReference type="PATRIC" id="fig|224308.179.peg.3234"/>
<dbReference type="eggNOG" id="COG3118">
    <property type="taxonomic scope" value="Bacteria"/>
</dbReference>
<dbReference type="InParanoid" id="P39914"/>
<dbReference type="OrthoDB" id="677051at2"/>
<dbReference type="BioCyc" id="BSUB:BSU29760-MONOMER"/>
<dbReference type="Proteomes" id="UP000001570">
    <property type="component" value="Chromosome"/>
</dbReference>
<dbReference type="GO" id="GO:0019899">
    <property type="term" value="F:enzyme binding"/>
    <property type="evidence" value="ECO:0000353"/>
    <property type="project" value="UniProtKB"/>
</dbReference>
<dbReference type="GO" id="GO:0016491">
    <property type="term" value="F:oxidoreductase activity"/>
    <property type="evidence" value="ECO:0007669"/>
    <property type="project" value="UniProtKB-KW"/>
</dbReference>
<dbReference type="GO" id="GO:0061770">
    <property type="term" value="F:translation elongation factor binding"/>
    <property type="evidence" value="ECO:0000353"/>
    <property type="project" value="UniProtKB"/>
</dbReference>
<dbReference type="GO" id="GO:0045454">
    <property type="term" value="P:cell redox homeostasis"/>
    <property type="evidence" value="ECO:0000314"/>
    <property type="project" value="UniProtKB"/>
</dbReference>
<dbReference type="GO" id="GO:0006979">
    <property type="term" value="P:response to oxidative stress"/>
    <property type="evidence" value="ECO:0000314"/>
    <property type="project" value="UniProtKB"/>
</dbReference>
<dbReference type="Gene3D" id="3.40.30.10">
    <property type="entry name" value="Glutaredoxin"/>
    <property type="match status" value="1"/>
</dbReference>
<dbReference type="InterPro" id="IPR022551">
    <property type="entry name" value="BrxC"/>
</dbReference>
<dbReference type="InterPro" id="IPR036249">
    <property type="entry name" value="Thioredoxin-like_sf"/>
</dbReference>
<dbReference type="NCBIfam" id="TIGR04019">
    <property type="entry name" value="B_thiol_YtxJ"/>
    <property type="match status" value="1"/>
</dbReference>
<dbReference type="Pfam" id="PF11009">
    <property type="entry name" value="BrxC"/>
    <property type="match status" value="1"/>
</dbReference>
<dbReference type="SUPFAM" id="SSF52833">
    <property type="entry name" value="Thioredoxin-like"/>
    <property type="match status" value="1"/>
</dbReference>
<keyword id="KW-0560">Oxidoreductase</keyword>
<keyword id="KW-0676">Redox-active center</keyword>
<keyword id="KW-1185">Reference proteome</keyword>